<reference key="1">
    <citation type="journal article" date="2006" name="J. Bacteriol.">
        <title>Genome sequence of Aeromonas hydrophila ATCC 7966T: jack of all trades.</title>
        <authorList>
            <person name="Seshadri R."/>
            <person name="Joseph S.W."/>
            <person name="Chopra A.K."/>
            <person name="Sha J."/>
            <person name="Shaw J."/>
            <person name="Graf J."/>
            <person name="Haft D.H."/>
            <person name="Wu M."/>
            <person name="Ren Q."/>
            <person name="Rosovitz M.J."/>
            <person name="Madupu R."/>
            <person name="Tallon L."/>
            <person name="Kim M."/>
            <person name="Jin S."/>
            <person name="Vuong H."/>
            <person name="Stine O.C."/>
            <person name="Ali A."/>
            <person name="Horneman A.J."/>
            <person name="Heidelberg J.F."/>
        </authorList>
    </citation>
    <scope>NUCLEOTIDE SEQUENCE [LARGE SCALE GENOMIC DNA]</scope>
    <source>
        <strain>ATCC 7966 / DSM 30187 / BCRC 13018 / CCUG 14551 / JCM 1027 / KCTC 2358 / NCIMB 9240 / NCTC 8049</strain>
    </source>
</reference>
<dbReference type="EMBL" id="CP000462">
    <property type="protein sequence ID" value="ABK37150.1"/>
    <property type="molecule type" value="Genomic_DNA"/>
</dbReference>
<dbReference type="RefSeq" id="WP_005308670.1">
    <property type="nucleotide sequence ID" value="NC_008570.1"/>
</dbReference>
<dbReference type="RefSeq" id="YP_855196.1">
    <property type="nucleotide sequence ID" value="NC_008570.1"/>
</dbReference>
<dbReference type="SMR" id="A0KG11"/>
<dbReference type="STRING" id="380703.AHA_0654"/>
<dbReference type="EnsemblBacteria" id="ABK37150">
    <property type="protein sequence ID" value="ABK37150"/>
    <property type="gene ID" value="AHA_0654"/>
</dbReference>
<dbReference type="GeneID" id="97859222"/>
<dbReference type="KEGG" id="aha:AHA_0654"/>
<dbReference type="PATRIC" id="fig|380703.7.peg.655"/>
<dbReference type="eggNOG" id="COG1438">
    <property type="taxonomic scope" value="Bacteria"/>
</dbReference>
<dbReference type="HOGENOM" id="CLU_097103_2_0_6"/>
<dbReference type="OrthoDB" id="7060358at2"/>
<dbReference type="UniPathway" id="UPA00068"/>
<dbReference type="PRO" id="PR:A0KG11"/>
<dbReference type="Proteomes" id="UP000000756">
    <property type="component" value="Chromosome"/>
</dbReference>
<dbReference type="GO" id="GO:0005737">
    <property type="term" value="C:cytoplasm"/>
    <property type="evidence" value="ECO:0007669"/>
    <property type="project" value="UniProtKB-SubCell"/>
</dbReference>
<dbReference type="GO" id="GO:0034618">
    <property type="term" value="F:arginine binding"/>
    <property type="evidence" value="ECO:0007669"/>
    <property type="project" value="InterPro"/>
</dbReference>
<dbReference type="GO" id="GO:0003677">
    <property type="term" value="F:DNA binding"/>
    <property type="evidence" value="ECO:0007669"/>
    <property type="project" value="UniProtKB-KW"/>
</dbReference>
<dbReference type="GO" id="GO:0003700">
    <property type="term" value="F:DNA-binding transcription factor activity"/>
    <property type="evidence" value="ECO:0007669"/>
    <property type="project" value="UniProtKB-UniRule"/>
</dbReference>
<dbReference type="GO" id="GO:0006526">
    <property type="term" value="P:L-arginine biosynthetic process"/>
    <property type="evidence" value="ECO:0007669"/>
    <property type="project" value="UniProtKB-UniPathway"/>
</dbReference>
<dbReference type="GO" id="GO:0051259">
    <property type="term" value="P:protein complex oligomerization"/>
    <property type="evidence" value="ECO:0007669"/>
    <property type="project" value="InterPro"/>
</dbReference>
<dbReference type="GO" id="GO:1900079">
    <property type="term" value="P:regulation of arginine biosynthetic process"/>
    <property type="evidence" value="ECO:0007669"/>
    <property type="project" value="UniProtKB-UniRule"/>
</dbReference>
<dbReference type="Gene3D" id="3.30.1360.40">
    <property type="match status" value="1"/>
</dbReference>
<dbReference type="Gene3D" id="1.10.10.10">
    <property type="entry name" value="Winged helix-like DNA-binding domain superfamily/Winged helix DNA-binding domain"/>
    <property type="match status" value="1"/>
</dbReference>
<dbReference type="HAMAP" id="MF_00173">
    <property type="entry name" value="Arg_repressor"/>
    <property type="match status" value="1"/>
</dbReference>
<dbReference type="InterPro" id="IPR001669">
    <property type="entry name" value="Arg_repress"/>
</dbReference>
<dbReference type="InterPro" id="IPR020899">
    <property type="entry name" value="Arg_repress_C"/>
</dbReference>
<dbReference type="InterPro" id="IPR036251">
    <property type="entry name" value="Arg_repress_C_sf"/>
</dbReference>
<dbReference type="InterPro" id="IPR020900">
    <property type="entry name" value="Arg_repress_DNA-bd"/>
</dbReference>
<dbReference type="InterPro" id="IPR036388">
    <property type="entry name" value="WH-like_DNA-bd_sf"/>
</dbReference>
<dbReference type="InterPro" id="IPR036390">
    <property type="entry name" value="WH_DNA-bd_sf"/>
</dbReference>
<dbReference type="NCBIfam" id="TIGR01529">
    <property type="entry name" value="argR_whole"/>
    <property type="match status" value="1"/>
</dbReference>
<dbReference type="NCBIfam" id="NF003457">
    <property type="entry name" value="PRK05066.1"/>
    <property type="match status" value="1"/>
</dbReference>
<dbReference type="PANTHER" id="PTHR34471">
    <property type="entry name" value="ARGININE REPRESSOR"/>
    <property type="match status" value="1"/>
</dbReference>
<dbReference type="PANTHER" id="PTHR34471:SF1">
    <property type="entry name" value="ARGININE REPRESSOR"/>
    <property type="match status" value="1"/>
</dbReference>
<dbReference type="Pfam" id="PF01316">
    <property type="entry name" value="Arg_repressor"/>
    <property type="match status" value="1"/>
</dbReference>
<dbReference type="Pfam" id="PF02863">
    <property type="entry name" value="Arg_repressor_C"/>
    <property type="match status" value="1"/>
</dbReference>
<dbReference type="PRINTS" id="PR01467">
    <property type="entry name" value="ARGREPRESSOR"/>
</dbReference>
<dbReference type="SUPFAM" id="SSF55252">
    <property type="entry name" value="C-terminal domain of arginine repressor"/>
    <property type="match status" value="1"/>
</dbReference>
<dbReference type="SUPFAM" id="SSF46785">
    <property type="entry name" value="Winged helix' DNA-binding domain"/>
    <property type="match status" value="1"/>
</dbReference>
<evidence type="ECO:0000255" key="1">
    <source>
        <dbReference type="HAMAP-Rule" id="MF_00173"/>
    </source>
</evidence>
<protein>
    <recommendedName>
        <fullName evidence="1">Arginine repressor</fullName>
    </recommendedName>
</protein>
<proteinExistence type="inferred from homology"/>
<sequence length="156" mass="17074">MKHNDKQEKLAKAFKALLKEERFGSQAEIVTALQEMGFENINQSKVSRMLSRFGAVRTRNAKMEMVYCLPVELGVPTTSSPLKNLVLDVDHNGALVVIHTSPGAAQLIARLLDSLGKAEGILGTIAGDDTIFITPTSDTDIEELYLSALELFEQTP</sequence>
<feature type="chain" id="PRO_1000023541" description="Arginine repressor">
    <location>
        <begin position="1"/>
        <end position="156"/>
    </location>
</feature>
<accession>A0KG11</accession>
<organism>
    <name type="scientific">Aeromonas hydrophila subsp. hydrophila (strain ATCC 7966 / DSM 30187 / BCRC 13018 / CCUG 14551 / JCM 1027 / KCTC 2358 / NCIMB 9240 / NCTC 8049)</name>
    <dbReference type="NCBI Taxonomy" id="380703"/>
    <lineage>
        <taxon>Bacteria</taxon>
        <taxon>Pseudomonadati</taxon>
        <taxon>Pseudomonadota</taxon>
        <taxon>Gammaproteobacteria</taxon>
        <taxon>Aeromonadales</taxon>
        <taxon>Aeromonadaceae</taxon>
        <taxon>Aeromonas</taxon>
    </lineage>
</organism>
<keyword id="KW-0028">Amino-acid biosynthesis</keyword>
<keyword id="KW-0055">Arginine biosynthesis</keyword>
<keyword id="KW-0963">Cytoplasm</keyword>
<keyword id="KW-0238">DNA-binding</keyword>
<keyword id="KW-1185">Reference proteome</keyword>
<keyword id="KW-0678">Repressor</keyword>
<keyword id="KW-0804">Transcription</keyword>
<keyword id="KW-0805">Transcription regulation</keyword>
<name>ARGR_AERHH</name>
<comment type="function">
    <text evidence="1">Regulates arginine biosynthesis genes.</text>
</comment>
<comment type="pathway">
    <text>Amino-acid biosynthesis; L-arginine biosynthesis [regulation].</text>
</comment>
<comment type="subcellular location">
    <subcellularLocation>
        <location evidence="1">Cytoplasm</location>
    </subcellularLocation>
</comment>
<comment type="similarity">
    <text evidence="1">Belongs to the ArgR family.</text>
</comment>
<gene>
    <name evidence="1" type="primary">argR</name>
    <name type="ordered locus">AHA_0654</name>
</gene>